<feature type="chain" id="PRO_0000069710" description="Leukotriene B4 receptor 1">
    <location>
        <begin position="1"/>
        <end position="351"/>
    </location>
</feature>
<feature type="topological domain" description="Extracellular" evidence="2">
    <location>
        <begin position="1"/>
        <end position="21"/>
    </location>
</feature>
<feature type="transmembrane region" description="Helical; Name=1" evidence="2">
    <location>
        <begin position="22"/>
        <end position="44"/>
    </location>
</feature>
<feature type="topological domain" description="Cytoplasmic" evidence="2">
    <location>
        <begin position="45"/>
        <end position="56"/>
    </location>
</feature>
<feature type="transmembrane region" description="Helical; Name=2" evidence="2">
    <location>
        <begin position="57"/>
        <end position="77"/>
    </location>
</feature>
<feature type="topological domain" description="Extracellular" evidence="2">
    <location>
        <begin position="78"/>
        <end position="93"/>
    </location>
</feature>
<feature type="transmembrane region" description="Helical; Name=3" evidence="2">
    <location>
        <begin position="94"/>
        <end position="115"/>
    </location>
</feature>
<feature type="topological domain" description="Cytoplasmic" evidence="2">
    <location>
        <begin position="116"/>
        <end position="140"/>
    </location>
</feature>
<feature type="transmembrane region" description="Helical; Name=4" evidence="2">
    <location>
        <begin position="141"/>
        <end position="161"/>
    </location>
</feature>
<feature type="topological domain" description="Extracellular" evidence="2">
    <location>
        <begin position="162"/>
        <end position="179"/>
    </location>
</feature>
<feature type="transmembrane region" description="Helical; Name=5" evidence="2">
    <location>
        <begin position="180"/>
        <end position="200"/>
    </location>
</feature>
<feature type="topological domain" description="Cytoplasmic" evidence="2">
    <location>
        <begin position="201"/>
        <end position="222"/>
    </location>
</feature>
<feature type="transmembrane region" description="Helical; Name=6" evidence="2">
    <location>
        <begin position="223"/>
        <end position="243"/>
    </location>
</feature>
<feature type="topological domain" description="Extracellular" evidence="2">
    <location>
        <begin position="244"/>
        <end position="268"/>
    </location>
</feature>
<feature type="transmembrane region" description="Helical; Name=7" evidence="2">
    <location>
        <begin position="269"/>
        <end position="289"/>
    </location>
</feature>
<feature type="topological domain" description="Cytoplasmic" evidence="2">
    <location>
        <begin position="290"/>
        <end position="351"/>
    </location>
</feature>
<feature type="region of interest" description="Disordered" evidence="4">
    <location>
        <begin position="311"/>
        <end position="351"/>
    </location>
</feature>
<feature type="compositionally biased region" description="Polar residues" evidence="4">
    <location>
        <begin position="311"/>
        <end position="327"/>
    </location>
</feature>
<feature type="compositionally biased region" description="Polar residues" evidence="4">
    <location>
        <begin position="339"/>
        <end position="351"/>
    </location>
</feature>
<feature type="glycosylation site" description="N-linked (GlcNAc...) asparagine" evidence="2">
    <location>
        <position position="4"/>
    </location>
</feature>
<feature type="glycosylation site" description="N-linked (GlcNAc...) asparagine" evidence="2">
    <location>
        <position position="164"/>
    </location>
</feature>
<evidence type="ECO:0000250" key="1"/>
<evidence type="ECO:0000255" key="2"/>
<evidence type="ECO:0000255" key="3">
    <source>
        <dbReference type="PROSITE-ProRule" id="PRU00521"/>
    </source>
</evidence>
<evidence type="ECO:0000256" key="4">
    <source>
        <dbReference type="SAM" id="MobiDB-lite"/>
    </source>
</evidence>
<evidence type="ECO:0000269" key="5">
    <source>
    </source>
</evidence>
<sequence length="351" mass="37931">MAANTTSTAATSSPGGMSLSLLPIVLLSVALVVGLPGNSFVVWSILKRMQKRSVTALLVLNLALADLAVLLTAPFFLHFLARGTWSFEVTGCRLCHYVCGVSMYASVLLITIMSLDRSLAVARPFVSQKVRTKAFARWVLAGIWVVSFLLAIPVLVYRTVTPKNKTLICDSRYPSDGHKVFHLLFEAITGFLLPFLAVVASYSDIGRRLQARRFRRSRRTGRLVVLIILAFAAFWLPYHLVNLVEAGRTLAGWDKNSPAGQRLKLARYVLIALAFLSSSVNPVLYACAGGGLLRSAGVGFVVKLLEGTGSEVSSTRRGGTLVQTPKATPTCPEPGPTDSFMTSSTPPESSK</sequence>
<organism>
    <name type="scientific">Rattus norvegicus</name>
    <name type="common">Rat</name>
    <dbReference type="NCBI Taxonomy" id="10116"/>
    <lineage>
        <taxon>Eukaryota</taxon>
        <taxon>Metazoa</taxon>
        <taxon>Chordata</taxon>
        <taxon>Craniata</taxon>
        <taxon>Vertebrata</taxon>
        <taxon>Euteleostomi</taxon>
        <taxon>Mammalia</taxon>
        <taxon>Eutheria</taxon>
        <taxon>Euarchontoglires</taxon>
        <taxon>Glires</taxon>
        <taxon>Rodentia</taxon>
        <taxon>Myomorpha</taxon>
        <taxon>Muroidea</taxon>
        <taxon>Muridae</taxon>
        <taxon>Murinae</taxon>
        <taxon>Rattus</taxon>
    </lineage>
</organism>
<protein>
    <recommendedName>
        <fullName>Leukotriene B4 receptor 1</fullName>
        <shortName>LTB4-R 1</shortName>
        <shortName>LTB4-R1</shortName>
    </recommendedName>
</protein>
<name>LT4R1_RAT</name>
<gene>
    <name type="primary">Ltb4r</name>
    <name type="synonym">Blt</name>
</gene>
<reference key="1">
    <citation type="journal article" date="1999" name="Biochem. Biophys. Res. Commun.">
        <title>Cloning and characterization of rat leukotriene B4 receptor.</title>
        <authorList>
            <person name="Toda A."/>
            <person name="Yokomizo T."/>
            <person name="Masuda K."/>
            <person name="Nakao A."/>
            <person name="Izumi T."/>
            <person name="Shimizu T."/>
        </authorList>
    </citation>
    <scope>NUCLEOTIDE SEQUENCE [GENOMIC DNA]</scope>
    <scope>CHARACTERIZATION</scope>
    <scope>TISSUE SPECIFICITY</scope>
</reference>
<accession>Q9R0Q2</accession>
<dbReference type="EMBL" id="AB025230">
    <property type="protein sequence ID" value="BAA84578.1"/>
    <property type="molecule type" value="Genomic_DNA"/>
</dbReference>
<dbReference type="PIR" id="JC7096">
    <property type="entry name" value="JC7096"/>
</dbReference>
<dbReference type="RefSeq" id="NP_067688.1">
    <property type="nucleotide sequence ID" value="NM_021656.2"/>
</dbReference>
<dbReference type="RefSeq" id="XP_006252073.1">
    <property type="nucleotide sequence ID" value="XM_006252011.3"/>
</dbReference>
<dbReference type="RefSeq" id="XP_006252074.1">
    <property type="nucleotide sequence ID" value="XM_006252012.1"/>
</dbReference>
<dbReference type="RefSeq" id="XP_017455280.1">
    <property type="nucleotide sequence ID" value="XM_017599791.1"/>
</dbReference>
<dbReference type="SMR" id="Q9R0Q2"/>
<dbReference type="FunCoup" id="Q9R0Q2">
    <property type="interactions" value="106"/>
</dbReference>
<dbReference type="STRING" id="10116.ENSRNOP00000027647"/>
<dbReference type="BindingDB" id="Q9R0Q2"/>
<dbReference type="ChEMBL" id="CHEMBL2126"/>
<dbReference type="GuidetoPHARMACOLOGY" id="267"/>
<dbReference type="GlyCosmos" id="Q9R0Q2">
    <property type="glycosylation" value="2 sites, No reported glycans"/>
</dbReference>
<dbReference type="GlyGen" id="Q9R0Q2">
    <property type="glycosylation" value="4 sites"/>
</dbReference>
<dbReference type="PhosphoSitePlus" id="Q9R0Q2"/>
<dbReference type="PaxDb" id="10116-ENSRNOP00000027647"/>
<dbReference type="GeneID" id="59264"/>
<dbReference type="KEGG" id="rno:59264"/>
<dbReference type="UCSC" id="RGD:620410">
    <property type="organism name" value="rat"/>
</dbReference>
<dbReference type="AGR" id="RGD:620410"/>
<dbReference type="CTD" id="1241"/>
<dbReference type="RGD" id="620410">
    <property type="gene designation" value="Ltb4r"/>
</dbReference>
<dbReference type="eggNOG" id="KOG3656">
    <property type="taxonomic scope" value="Eukaryota"/>
</dbReference>
<dbReference type="HOGENOM" id="CLU_009579_8_0_1"/>
<dbReference type="InParanoid" id="Q9R0Q2"/>
<dbReference type="OrthoDB" id="8888529at2759"/>
<dbReference type="PhylomeDB" id="Q9R0Q2"/>
<dbReference type="TreeFam" id="TF330976"/>
<dbReference type="Reactome" id="R-RNO-391906">
    <property type="pathway name" value="Leukotriene receptors"/>
</dbReference>
<dbReference type="Reactome" id="R-RNO-416476">
    <property type="pathway name" value="G alpha (q) signalling events"/>
</dbReference>
<dbReference type="PRO" id="PR:Q9R0Q2"/>
<dbReference type="Proteomes" id="UP000002494">
    <property type="component" value="Chromosome 15"/>
</dbReference>
<dbReference type="Bgee" id="ENSRNOG00000020399">
    <property type="expression patterns" value="Expressed in esophagus and 9 other cell types or tissues"/>
</dbReference>
<dbReference type="GO" id="GO:0005886">
    <property type="term" value="C:plasma membrane"/>
    <property type="evidence" value="ECO:0000318"/>
    <property type="project" value="GO_Central"/>
</dbReference>
<dbReference type="GO" id="GO:0008528">
    <property type="term" value="F:G protein-coupled peptide receptor activity"/>
    <property type="evidence" value="ECO:0000318"/>
    <property type="project" value="GO_Central"/>
</dbReference>
<dbReference type="GO" id="GO:0001632">
    <property type="term" value="F:leukotriene B4 receptor activity"/>
    <property type="evidence" value="ECO:0000266"/>
    <property type="project" value="RGD"/>
</dbReference>
<dbReference type="GO" id="GO:0004974">
    <property type="term" value="F:leukotriene receptor activity"/>
    <property type="evidence" value="ECO:0000314"/>
    <property type="project" value="RGD"/>
</dbReference>
<dbReference type="GO" id="GO:0007218">
    <property type="term" value="P:neuropeptide signaling pathway"/>
    <property type="evidence" value="ECO:0000318"/>
    <property type="project" value="GO_Central"/>
</dbReference>
<dbReference type="GO" id="GO:0007165">
    <property type="term" value="P:signal transduction"/>
    <property type="evidence" value="ECO:0000266"/>
    <property type="project" value="RGD"/>
</dbReference>
<dbReference type="FunFam" id="1.20.1070.10:FF:000109">
    <property type="entry name" value="Leukotriene B4 receptor"/>
    <property type="match status" value="1"/>
</dbReference>
<dbReference type="Gene3D" id="1.20.1070.10">
    <property type="entry name" value="Rhodopsin 7-helix transmembrane proteins"/>
    <property type="match status" value="1"/>
</dbReference>
<dbReference type="InterPro" id="IPR000826">
    <property type="entry name" value="Formyl_rcpt-rel"/>
</dbReference>
<dbReference type="InterPro" id="IPR000276">
    <property type="entry name" value="GPCR_Rhodpsn"/>
</dbReference>
<dbReference type="InterPro" id="IPR017452">
    <property type="entry name" value="GPCR_Rhodpsn_7TM"/>
</dbReference>
<dbReference type="InterPro" id="IPR003981">
    <property type="entry name" value="Leukotriene_B4_rcpt"/>
</dbReference>
<dbReference type="InterPro" id="IPR003983">
    <property type="entry name" value="Leukotriene_B4_typ-1_rcpt"/>
</dbReference>
<dbReference type="PANTHER" id="PTHR24225">
    <property type="entry name" value="CHEMOTACTIC RECEPTOR"/>
    <property type="match status" value="1"/>
</dbReference>
<dbReference type="PANTHER" id="PTHR24225:SF72">
    <property type="entry name" value="G-PROTEIN COUPLED RECEPTORS FAMILY 1 PROFILE DOMAIN-CONTAINING PROTEIN-RELATED"/>
    <property type="match status" value="1"/>
</dbReference>
<dbReference type="Pfam" id="PF00001">
    <property type="entry name" value="7tm_1"/>
    <property type="match status" value="1"/>
</dbReference>
<dbReference type="PRINTS" id="PR00237">
    <property type="entry name" value="GPCRRHODOPSN"/>
</dbReference>
<dbReference type="PRINTS" id="PR01477">
    <property type="entry name" value="LTB1RECEPTOR"/>
</dbReference>
<dbReference type="PRINTS" id="PR01476">
    <property type="entry name" value="LTBRECEPTOR"/>
</dbReference>
<dbReference type="SUPFAM" id="SSF81321">
    <property type="entry name" value="Family A G protein-coupled receptor-like"/>
    <property type="match status" value="1"/>
</dbReference>
<dbReference type="PROSITE" id="PS00237">
    <property type="entry name" value="G_PROTEIN_RECEP_F1_1"/>
    <property type="match status" value="1"/>
</dbReference>
<dbReference type="PROSITE" id="PS50262">
    <property type="entry name" value="G_PROTEIN_RECEP_F1_2"/>
    <property type="match status" value="1"/>
</dbReference>
<proteinExistence type="evidence at protein level"/>
<keyword id="KW-1003">Cell membrane</keyword>
<keyword id="KW-0297">G-protein coupled receptor</keyword>
<keyword id="KW-0325">Glycoprotein</keyword>
<keyword id="KW-0472">Membrane</keyword>
<keyword id="KW-0597">Phosphoprotein</keyword>
<keyword id="KW-0675">Receptor</keyword>
<keyword id="KW-1185">Reference proteome</keyword>
<keyword id="KW-0807">Transducer</keyword>
<keyword id="KW-0812">Transmembrane</keyword>
<keyword id="KW-1133">Transmembrane helix</keyword>
<comment type="function">
    <text>Receptor for leukotriene B4, a potent chemoattractant involved in inflammation and immune response.</text>
</comment>
<comment type="subcellular location">
    <subcellularLocation>
        <location>Cell membrane</location>
        <topology>Multi-pass membrane protein</topology>
    </subcellularLocation>
</comment>
<comment type="tissue specificity">
    <text evidence="5">Exclusively expressed in polymorphonuclear leukocytes.</text>
</comment>
<comment type="PTM">
    <text evidence="1">Phosphorylated by GRK6 upon leukotriene B4 binding; which promotes desensitization.</text>
</comment>
<comment type="similarity">
    <text evidence="3">Belongs to the G-protein coupled receptor 1 family.</text>
</comment>